<proteinExistence type="inferred from homology"/>
<gene>
    <name type="ordered locus">CC_3663</name>
</gene>
<sequence length="250" mass="26731">MNDFNRGYARSIPADRADMSVDAGLRKFMLGVYNKVALGLVVSGALAYATSSVPAVRDLLFVVQGGRLAGVTPLYMVVAFAPLVLMLIAGFAMRNPKPETAGALYWTIVSLIGASLGSVMLRYTGESVAATFFVTATAFGGLSLFGYTTKKDLTGFGSFLMMGVIGLIVASIVSIFLKSPALLFAINVLGVLIFSGLIAYDTQRLKMTYYEMGGDRASMAVATNFGALSLYINFINLFQFLLSFFGGNRE</sequence>
<protein>
    <recommendedName>
        <fullName>Uncharacterized protein CC_3663</fullName>
    </recommendedName>
</protein>
<reference key="1">
    <citation type="journal article" date="2001" name="Proc. Natl. Acad. Sci. U.S.A.">
        <title>Complete genome sequence of Caulobacter crescentus.</title>
        <authorList>
            <person name="Nierman W.C."/>
            <person name="Feldblyum T.V."/>
            <person name="Laub M.T."/>
            <person name="Paulsen I.T."/>
            <person name="Nelson K.E."/>
            <person name="Eisen J.A."/>
            <person name="Heidelberg J.F."/>
            <person name="Alley M.R.K."/>
            <person name="Ohta N."/>
            <person name="Maddock J.R."/>
            <person name="Potocka I."/>
            <person name="Nelson W.C."/>
            <person name="Newton A."/>
            <person name="Stephens C."/>
            <person name="Phadke N.D."/>
            <person name="Ely B."/>
            <person name="DeBoy R.T."/>
            <person name="Dodson R.J."/>
            <person name="Durkin A.S."/>
            <person name="Gwinn M.L."/>
            <person name="Haft D.H."/>
            <person name="Kolonay J.F."/>
            <person name="Smit J."/>
            <person name="Craven M.B."/>
            <person name="Khouri H.M."/>
            <person name="Shetty J."/>
            <person name="Berry K.J."/>
            <person name="Utterback T.R."/>
            <person name="Tran K."/>
            <person name="Wolf A.M."/>
            <person name="Vamathevan J.J."/>
            <person name="Ermolaeva M.D."/>
            <person name="White O."/>
            <person name="Salzberg S.L."/>
            <person name="Venter J.C."/>
            <person name="Shapiro L."/>
            <person name="Fraser C.M."/>
        </authorList>
    </citation>
    <scope>NUCLEOTIDE SEQUENCE [LARGE SCALE GENOMIC DNA]</scope>
    <source>
        <strain>ATCC 19089 / CIP 103742 / CB 15</strain>
    </source>
</reference>
<comment type="subcellular location">
    <subcellularLocation>
        <location evidence="2">Cell membrane</location>
        <topology evidence="2">Multi-pass membrane protein</topology>
    </subcellularLocation>
</comment>
<comment type="similarity">
    <text evidence="2">Belongs to the BI1 family.</text>
</comment>
<comment type="sequence caution" evidence="2">
    <conflict type="erroneous initiation">
        <sequence resource="EMBL-CDS" id="AAK25625"/>
    </conflict>
</comment>
<feature type="chain" id="PRO_0000179096" description="Uncharacterized protein CC_3663">
    <location>
        <begin position="1"/>
        <end position="250"/>
    </location>
</feature>
<feature type="transmembrane region" description="Helical" evidence="1">
    <location>
        <begin position="36"/>
        <end position="56"/>
    </location>
</feature>
<feature type="transmembrane region" description="Helical" evidence="1">
    <location>
        <begin position="73"/>
        <end position="93"/>
    </location>
</feature>
<feature type="transmembrane region" description="Helical" evidence="1">
    <location>
        <begin position="101"/>
        <end position="121"/>
    </location>
</feature>
<feature type="transmembrane region" description="Helical" evidence="1">
    <location>
        <begin position="128"/>
        <end position="148"/>
    </location>
</feature>
<feature type="transmembrane region" description="Helical" evidence="1">
    <location>
        <begin position="156"/>
        <end position="176"/>
    </location>
</feature>
<feature type="transmembrane region" description="Helical" evidence="1">
    <location>
        <begin position="180"/>
        <end position="200"/>
    </location>
</feature>
<feature type="transmembrane region" description="Helical" evidence="1">
    <location>
        <begin position="225"/>
        <end position="245"/>
    </location>
</feature>
<dbReference type="EMBL" id="AE005673">
    <property type="protein sequence ID" value="AAK25625.1"/>
    <property type="status" value="ALT_INIT"/>
    <property type="molecule type" value="Genomic_DNA"/>
</dbReference>
<dbReference type="PIR" id="E87703">
    <property type="entry name" value="E87703"/>
</dbReference>
<dbReference type="RefSeq" id="NP_422457.1">
    <property type="nucleotide sequence ID" value="NC_002696.2"/>
</dbReference>
<dbReference type="RefSeq" id="WP_015923334.1">
    <property type="nucleotide sequence ID" value="NC_002696.2"/>
</dbReference>
<dbReference type="SMR" id="Q9A2A3"/>
<dbReference type="STRING" id="190650.CC_3663"/>
<dbReference type="EnsemblBacteria" id="AAK25625">
    <property type="protein sequence ID" value="AAK25625"/>
    <property type="gene ID" value="CC_3663"/>
</dbReference>
<dbReference type="KEGG" id="ccr:CC_3663"/>
<dbReference type="PATRIC" id="fig|190650.5.peg.3664"/>
<dbReference type="eggNOG" id="COG0670">
    <property type="taxonomic scope" value="Bacteria"/>
</dbReference>
<dbReference type="HOGENOM" id="CLU_058671_1_1_5"/>
<dbReference type="Proteomes" id="UP000001816">
    <property type="component" value="Chromosome"/>
</dbReference>
<dbReference type="GO" id="GO:0005886">
    <property type="term" value="C:plasma membrane"/>
    <property type="evidence" value="ECO:0007669"/>
    <property type="project" value="UniProtKB-SubCell"/>
</dbReference>
<dbReference type="CDD" id="cd10432">
    <property type="entry name" value="BI-1-like_bacterial"/>
    <property type="match status" value="1"/>
</dbReference>
<dbReference type="InterPro" id="IPR006214">
    <property type="entry name" value="Bax_inhibitor_1-related"/>
</dbReference>
<dbReference type="PANTHER" id="PTHR23291">
    <property type="entry name" value="BAX INHIBITOR-RELATED"/>
    <property type="match status" value="1"/>
</dbReference>
<dbReference type="PANTHER" id="PTHR23291:SF50">
    <property type="entry name" value="PROTEIN LIFEGUARD 4"/>
    <property type="match status" value="1"/>
</dbReference>
<dbReference type="Pfam" id="PF01027">
    <property type="entry name" value="Bax1-I"/>
    <property type="match status" value="1"/>
</dbReference>
<organism>
    <name type="scientific">Caulobacter vibrioides (strain ATCC 19089 / CIP 103742 / CB 15)</name>
    <name type="common">Caulobacter crescentus</name>
    <dbReference type="NCBI Taxonomy" id="190650"/>
    <lineage>
        <taxon>Bacteria</taxon>
        <taxon>Pseudomonadati</taxon>
        <taxon>Pseudomonadota</taxon>
        <taxon>Alphaproteobacteria</taxon>
        <taxon>Caulobacterales</taxon>
        <taxon>Caulobacteraceae</taxon>
        <taxon>Caulobacter</taxon>
    </lineage>
</organism>
<accession>Q9A2A3</accession>
<name>Y3663_CAUVC</name>
<keyword id="KW-1003">Cell membrane</keyword>
<keyword id="KW-0472">Membrane</keyword>
<keyword id="KW-1185">Reference proteome</keyword>
<keyword id="KW-0812">Transmembrane</keyword>
<keyword id="KW-1133">Transmembrane helix</keyword>
<evidence type="ECO:0000255" key="1"/>
<evidence type="ECO:0000305" key="2"/>